<sequence>MARVEKPRKVILVGDGAVGSTFAFSMVQQGIAEELGIIDIAKEHVEGDAIDLADATPWTFPKNIYAADYADCKDADLVVITAGAPQKPGETRLDLVNKNLKILSSIVEPVVESGFEGIFLVVANPVDILTHATWKISGFPKDRVIGSGTSLDTGRLQKVIGKMEHVDPRSVNAYMLGEHGDTEFPVWSYNNVGGVKVSDWVKAHGMDESKLEEIHKEVADMAYDIINKKGATFYGIGTASAMIAKAILNDEHRVLPLSVAMDGQYGLHDLHIGTPAVVGRNGLEQIIEMPLTADEQAKMEASAKQLKEVMDKAFEETGVKVRQ</sequence>
<gene>
    <name evidence="1" type="primary">ldh1</name>
    <name type="ordered locus">LBA0271</name>
</gene>
<organism>
    <name type="scientific">Lactobacillus acidophilus (strain ATCC 700396 / NCK56 / N2 / NCFM)</name>
    <dbReference type="NCBI Taxonomy" id="272621"/>
    <lineage>
        <taxon>Bacteria</taxon>
        <taxon>Bacillati</taxon>
        <taxon>Bacillota</taxon>
        <taxon>Bacilli</taxon>
        <taxon>Lactobacillales</taxon>
        <taxon>Lactobacillaceae</taxon>
        <taxon>Lactobacillus</taxon>
    </lineage>
</organism>
<evidence type="ECO:0000255" key="1">
    <source>
        <dbReference type="HAMAP-Rule" id="MF_00488"/>
    </source>
</evidence>
<reference key="1">
    <citation type="journal article" date="2005" name="Proc. Natl. Acad. Sci. U.S.A.">
        <title>Complete genome sequence of the probiotic lactic acid bacterium Lactobacillus acidophilus NCFM.</title>
        <authorList>
            <person name="Altermann E."/>
            <person name="Russell W.M."/>
            <person name="Azcarate-Peril M.A."/>
            <person name="Barrangou R."/>
            <person name="Buck B.L."/>
            <person name="McAuliffe O."/>
            <person name="Souther N."/>
            <person name="Dobson A."/>
            <person name="Duong T."/>
            <person name="Callanan M."/>
            <person name="Lick S."/>
            <person name="Hamrick A."/>
            <person name="Cano R."/>
            <person name="Klaenhammer T.R."/>
        </authorList>
    </citation>
    <scope>NUCLEOTIDE SEQUENCE [LARGE SCALE GENOMIC DNA]</scope>
    <source>
        <strain>ATCC 700396 / NCK56 / N2 / NCFM</strain>
    </source>
</reference>
<dbReference type="EC" id="1.1.1.27" evidence="1"/>
<dbReference type="EMBL" id="CP000033">
    <property type="protein sequence ID" value="AAV42164.1"/>
    <property type="molecule type" value="Genomic_DNA"/>
</dbReference>
<dbReference type="RefSeq" id="WP_003549000.1">
    <property type="nucleotide sequence ID" value="NC_006814.3"/>
</dbReference>
<dbReference type="RefSeq" id="YP_193195.1">
    <property type="nucleotide sequence ID" value="NC_006814.3"/>
</dbReference>
<dbReference type="SMR" id="Q5FMB0"/>
<dbReference type="STRING" id="272621.LBA0271"/>
<dbReference type="KEGG" id="lac:LBA0271"/>
<dbReference type="PATRIC" id="fig|272621.13.peg.256"/>
<dbReference type="eggNOG" id="COG0039">
    <property type="taxonomic scope" value="Bacteria"/>
</dbReference>
<dbReference type="HOGENOM" id="CLU_045401_1_1_9"/>
<dbReference type="OrthoDB" id="9802969at2"/>
<dbReference type="BioCyc" id="LACI272621:G1G49-262-MONOMER"/>
<dbReference type="BRENDA" id="1.1.1.27">
    <property type="organism ID" value="2846"/>
</dbReference>
<dbReference type="UniPathway" id="UPA00554">
    <property type="reaction ID" value="UER00611"/>
</dbReference>
<dbReference type="Proteomes" id="UP000006381">
    <property type="component" value="Chromosome"/>
</dbReference>
<dbReference type="GO" id="GO:0005737">
    <property type="term" value="C:cytoplasm"/>
    <property type="evidence" value="ECO:0007669"/>
    <property type="project" value="UniProtKB-SubCell"/>
</dbReference>
<dbReference type="GO" id="GO:0004459">
    <property type="term" value="F:L-lactate dehydrogenase activity"/>
    <property type="evidence" value="ECO:0007669"/>
    <property type="project" value="UniProtKB-UniRule"/>
</dbReference>
<dbReference type="GO" id="GO:0006096">
    <property type="term" value="P:glycolytic process"/>
    <property type="evidence" value="ECO:0007669"/>
    <property type="project" value="UniProtKB-UniRule"/>
</dbReference>
<dbReference type="GO" id="GO:0006089">
    <property type="term" value="P:lactate metabolic process"/>
    <property type="evidence" value="ECO:0007669"/>
    <property type="project" value="TreeGrafter"/>
</dbReference>
<dbReference type="CDD" id="cd05291">
    <property type="entry name" value="HicDH_like"/>
    <property type="match status" value="1"/>
</dbReference>
<dbReference type="FunFam" id="3.40.50.720:FF:000018">
    <property type="entry name" value="Malate dehydrogenase"/>
    <property type="match status" value="1"/>
</dbReference>
<dbReference type="Gene3D" id="3.90.110.10">
    <property type="entry name" value="Lactate dehydrogenase/glycoside hydrolase, family 4, C-terminal"/>
    <property type="match status" value="1"/>
</dbReference>
<dbReference type="Gene3D" id="3.40.50.720">
    <property type="entry name" value="NAD(P)-binding Rossmann-like Domain"/>
    <property type="match status" value="1"/>
</dbReference>
<dbReference type="HAMAP" id="MF_00488">
    <property type="entry name" value="Lactate_dehydrog"/>
    <property type="match status" value="1"/>
</dbReference>
<dbReference type="InterPro" id="IPR001557">
    <property type="entry name" value="L-lactate/malate_DH"/>
</dbReference>
<dbReference type="InterPro" id="IPR011304">
    <property type="entry name" value="L-lactate_DH"/>
</dbReference>
<dbReference type="InterPro" id="IPR018177">
    <property type="entry name" value="L-lactate_DH_AS"/>
</dbReference>
<dbReference type="InterPro" id="IPR022383">
    <property type="entry name" value="Lactate/malate_DH_C"/>
</dbReference>
<dbReference type="InterPro" id="IPR001236">
    <property type="entry name" value="Lactate/malate_DH_N"/>
</dbReference>
<dbReference type="InterPro" id="IPR015955">
    <property type="entry name" value="Lactate_DH/Glyco_Ohase_4_C"/>
</dbReference>
<dbReference type="InterPro" id="IPR036291">
    <property type="entry name" value="NAD(P)-bd_dom_sf"/>
</dbReference>
<dbReference type="NCBIfam" id="TIGR01771">
    <property type="entry name" value="L-LDH-NAD"/>
    <property type="match status" value="1"/>
</dbReference>
<dbReference type="NCBIfam" id="NF000824">
    <property type="entry name" value="PRK00066.1"/>
    <property type="match status" value="1"/>
</dbReference>
<dbReference type="NCBIfam" id="NF004863">
    <property type="entry name" value="PRK06223.1"/>
    <property type="match status" value="1"/>
</dbReference>
<dbReference type="PANTHER" id="PTHR43128">
    <property type="entry name" value="L-2-HYDROXYCARBOXYLATE DEHYDROGENASE (NAD(P)(+))"/>
    <property type="match status" value="1"/>
</dbReference>
<dbReference type="PANTHER" id="PTHR43128:SF16">
    <property type="entry name" value="L-LACTATE DEHYDROGENASE"/>
    <property type="match status" value="1"/>
</dbReference>
<dbReference type="Pfam" id="PF02866">
    <property type="entry name" value="Ldh_1_C"/>
    <property type="match status" value="1"/>
</dbReference>
<dbReference type="Pfam" id="PF00056">
    <property type="entry name" value="Ldh_1_N"/>
    <property type="match status" value="1"/>
</dbReference>
<dbReference type="PIRSF" id="PIRSF000102">
    <property type="entry name" value="Lac_mal_DH"/>
    <property type="match status" value="1"/>
</dbReference>
<dbReference type="PRINTS" id="PR00086">
    <property type="entry name" value="LLDHDRGNASE"/>
</dbReference>
<dbReference type="SUPFAM" id="SSF56327">
    <property type="entry name" value="LDH C-terminal domain-like"/>
    <property type="match status" value="1"/>
</dbReference>
<dbReference type="SUPFAM" id="SSF51735">
    <property type="entry name" value="NAD(P)-binding Rossmann-fold domains"/>
    <property type="match status" value="1"/>
</dbReference>
<dbReference type="PROSITE" id="PS00064">
    <property type="entry name" value="L_LDH"/>
    <property type="match status" value="1"/>
</dbReference>
<feature type="chain" id="PRO_0000237547" description="L-lactate dehydrogenase 1">
    <location>
        <begin position="1"/>
        <end position="323"/>
    </location>
</feature>
<feature type="active site" description="Proton acceptor" evidence="1">
    <location>
        <position position="179"/>
    </location>
</feature>
<feature type="binding site" evidence="1">
    <location>
        <position position="18"/>
    </location>
    <ligand>
        <name>NAD(+)</name>
        <dbReference type="ChEBI" id="CHEBI:57540"/>
    </ligand>
</feature>
<feature type="binding site" evidence="1">
    <location>
        <position position="39"/>
    </location>
    <ligand>
        <name>NAD(+)</name>
        <dbReference type="ChEBI" id="CHEBI:57540"/>
    </ligand>
</feature>
<feature type="binding site" evidence="1">
    <location>
        <position position="69"/>
    </location>
    <ligand>
        <name>NAD(+)</name>
        <dbReference type="ChEBI" id="CHEBI:57540"/>
    </ligand>
</feature>
<feature type="binding site" evidence="1">
    <location>
        <begin position="83"/>
        <end position="84"/>
    </location>
    <ligand>
        <name>NAD(+)</name>
        <dbReference type="ChEBI" id="CHEBI:57540"/>
    </ligand>
</feature>
<feature type="binding site" evidence="1">
    <location>
        <position position="86"/>
    </location>
    <ligand>
        <name>substrate</name>
    </ligand>
</feature>
<feature type="binding site" evidence="1">
    <location>
        <position position="92"/>
    </location>
    <ligand>
        <name>substrate</name>
    </ligand>
</feature>
<feature type="binding site" evidence="1">
    <location>
        <position position="105"/>
    </location>
    <ligand>
        <name>NAD(+)</name>
        <dbReference type="ChEBI" id="CHEBI:57540"/>
    </ligand>
</feature>
<feature type="binding site" evidence="1">
    <location>
        <begin position="122"/>
        <end position="124"/>
    </location>
    <ligand>
        <name>NAD(+)</name>
        <dbReference type="ChEBI" id="CHEBI:57540"/>
    </ligand>
</feature>
<feature type="binding site" evidence="1">
    <location>
        <begin position="124"/>
        <end position="127"/>
    </location>
    <ligand>
        <name>substrate</name>
    </ligand>
</feature>
<feature type="binding site" evidence="1">
    <location>
        <position position="147"/>
    </location>
    <ligand>
        <name>NAD(+)</name>
        <dbReference type="ChEBI" id="CHEBI:57540"/>
    </ligand>
</feature>
<feature type="binding site" evidence="1">
    <location>
        <begin position="152"/>
        <end position="155"/>
    </location>
    <ligand>
        <name>substrate</name>
    </ligand>
</feature>
<feature type="binding site" evidence="1">
    <location>
        <position position="232"/>
    </location>
    <ligand>
        <name>substrate</name>
    </ligand>
</feature>
<feature type="modified residue" description="Phosphotyrosine" evidence="1">
    <location>
        <position position="223"/>
    </location>
</feature>
<name>LDH1_LACAC</name>
<protein>
    <recommendedName>
        <fullName evidence="1">L-lactate dehydrogenase 1</fullName>
        <shortName evidence="1">L-LDH 1</shortName>
        <ecNumber evidence="1">1.1.1.27</ecNumber>
    </recommendedName>
</protein>
<comment type="function">
    <text evidence="1">Catalyzes the conversion of lactate to pyruvate.</text>
</comment>
<comment type="catalytic activity">
    <reaction evidence="1">
        <text>(S)-lactate + NAD(+) = pyruvate + NADH + H(+)</text>
        <dbReference type="Rhea" id="RHEA:23444"/>
        <dbReference type="ChEBI" id="CHEBI:15361"/>
        <dbReference type="ChEBI" id="CHEBI:15378"/>
        <dbReference type="ChEBI" id="CHEBI:16651"/>
        <dbReference type="ChEBI" id="CHEBI:57540"/>
        <dbReference type="ChEBI" id="CHEBI:57945"/>
        <dbReference type="EC" id="1.1.1.27"/>
    </reaction>
</comment>
<comment type="pathway">
    <text evidence="1">Fermentation; pyruvate fermentation to lactate; (S)-lactate from pyruvate: step 1/1.</text>
</comment>
<comment type="subunit">
    <text evidence="1">Homotetramer.</text>
</comment>
<comment type="subcellular location">
    <subcellularLocation>
        <location evidence="1">Cytoplasm</location>
    </subcellularLocation>
</comment>
<comment type="similarity">
    <text evidence="1">Belongs to the LDH/MDH superfamily. LDH family.</text>
</comment>
<accession>Q5FMB0</accession>
<proteinExistence type="inferred from homology"/>
<keyword id="KW-0963">Cytoplasm</keyword>
<keyword id="KW-0520">NAD</keyword>
<keyword id="KW-0560">Oxidoreductase</keyword>
<keyword id="KW-0597">Phosphoprotein</keyword>
<keyword id="KW-1185">Reference proteome</keyword>